<reference key="1">
    <citation type="submission" date="2009-06" db="EMBL/GenBank/DDBJ databases">
        <title>Complete sequence of Desulfovibrio salexigens DSM 2638.</title>
        <authorList>
            <consortium name="US DOE Joint Genome Institute"/>
            <person name="Lucas S."/>
            <person name="Copeland A."/>
            <person name="Lapidus A."/>
            <person name="Glavina del Rio T."/>
            <person name="Tice H."/>
            <person name="Bruce D."/>
            <person name="Goodwin L."/>
            <person name="Pitluck S."/>
            <person name="Munk A.C."/>
            <person name="Brettin T."/>
            <person name="Detter J.C."/>
            <person name="Han C."/>
            <person name="Tapia R."/>
            <person name="Larimer F."/>
            <person name="Land M."/>
            <person name="Hauser L."/>
            <person name="Kyrpides N."/>
            <person name="Anderson I."/>
            <person name="Wall J.D."/>
            <person name="Arkin A.P."/>
            <person name="Dehal P."/>
            <person name="Chivian D."/>
            <person name="Giles B."/>
            <person name="Hazen T.C."/>
        </authorList>
    </citation>
    <scope>NUCLEOTIDE SEQUENCE [LARGE SCALE GENOMIC DNA]</scope>
    <source>
        <strain>ATCC 14822 / DSM 2638 / NCIMB 8403 / VKM B-1763</strain>
    </source>
</reference>
<evidence type="ECO:0000255" key="1">
    <source>
        <dbReference type="HAMAP-Rule" id="MF_00238"/>
    </source>
</evidence>
<keyword id="KW-0067">ATP-binding</keyword>
<keyword id="KW-0963">Cytoplasm</keyword>
<keyword id="KW-0418">Kinase</keyword>
<keyword id="KW-0547">Nucleotide-binding</keyword>
<keyword id="KW-1185">Reference proteome</keyword>
<keyword id="KW-0808">Transferase</keyword>
<protein>
    <recommendedName>
        <fullName evidence="1">Cytidylate kinase</fullName>
        <shortName evidence="1">CK</shortName>
        <ecNumber evidence="1">2.7.4.25</ecNumber>
    </recommendedName>
    <alternativeName>
        <fullName evidence="1">Cytidine monophosphate kinase</fullName>
        <shortName evidence="1">CMP kinase</shortName>
    </alternativeName>
</protein>
<sequence length="223" mass="24706">MDTPFIITLDGPAGVGKSTLAKRLADRFEIAYLDTGAMFRGTAWKLGEGAWDWDADKLDQALKGLEFTLSGSGSNSTLSLNGTHLTDEIRTETVGMWASNMAKIPAVREYQKIAQRAIGETTSLIAEGRDMGTVIFPQAPCKFFLDADLEERAHRRFEQLKDMGKPADMAELIEQIAARDDQDRNRKVAPLKPAEDSIIVDTTHLDINGVFDKLVFETEKKVN</sequence>
<feature type="chain" id="PRO_1000204447" description="Cytidylate kinase">
    <location>
        <begin position="1"/>
        <end position="223"/>
    </location>
</feature>
<feature type="binding site" evidence="1">
    <location>
        <begin position="11"/>
        <end position="19"/>
    </location>
    <ligand>
        <name>ATP</name>
        <dbReference type="ChEBI" id="CHEBI:30616"/>
    </ligand>
</feature>
<comment type="catalytic activity">
    <reaction evidence="1">
        <text>CMP + ATP = CDP + ADP</text>
        <dbReference type="Rhea" id="RHEA:11600"/>
        <dbReference type="ChEBI" id="CHEBI:30616"/>
        <dbReference type="ChEBI" id="CHEBI:58069"/>
        <dbReference type="ChEBI" id="CHEBI:60377"/>
        <dbReference type="ChEBI" id="CHEBI:456216"/>
        <dbReference type="EC" id="2.7.4.25"/>
    </reaction>
</comment>
<comment type="catalytic activity">
    <reaction evidence="1">
        <text>dCMP + ATP = dCDP + ADP</text>
        <dbReference type="Rhea" id="RHEA:25094"/>
        <dbReference type="ChEBI" id="CHEBI:30616"/>
        <dbReference type="ChEBI" id="CHEBI:57566"/>
        <dbReference type="ChEBI" id="CHEBI:58593"/>
        <dbReference type="ChEBI" id="CHEBI:456216"/>
        <dbReference type="EC" id="2.7.4.25"/>
    </reaction>
</comment>
<comment type="subcellular location">
    <subcellularLocation>
        <location evidence="1">Cytoplasm</location>
    </subcellularLocation>
</comment>
<comment type="similarity">
    <text evidence="1">Belongs to the cytidylate kinase family. Type 1 subfamily.</text>
</comment>
<name>KCY_MARSD</name>
<dbReference type="EC" id="2.7.4.25" evidence="1"/>
<dbReference type="EMBL" id="CP001649">
    <property type="protein sequence ID" value="ACS78247.1"/>
    <property type="molecule type" value="Genomic_DNA"/>
</dbReference>
<dbReference type="RefSeq" id="WP_012765773.1">
    <property type="nucleotide sequence ID" value="NC_012881.1"/>
</dbReference>
<dbReference type="SMR" id="C6BVN3"/>
<dbReference type="STRING" id="526222.Desal_0177"/>
<dbReference type="KEGG" id="dsa:Desal_0177"/>
<dbReference type="eggNOG" id="COG0283">
    <property type="taxonomic scope" value="Bacteria"/>
</dbReference>
<dbReference type="HOGENOM" id="CLU_079959_0_0_7"/>
<dbReference type="OrthoDB" id="9807434at2"/>
<dbReference type="Proteomes" id="UP000002601">
    <property type="component" value="Chromosome"/>
</dbReference>
<dbReference type="GO" id="GO:0005737">
    <property type="term" value="C:cytoplasm"/>
    <property type="evidence" value="ECO:0007669"/>
    <property type="project" value="UniProtKB-SubCell"/>
</dbReference>
<dbReference type="GO" id="GO:0005524">
    <property type="term" value="F:ATP binding"/>
    <property type="evidence" value="ECO:0007669"/>
    <property type="project" value="UniProtKB-UniRule"/>
</dbReference>
<dbReference type="GO" id="GO:0036430">
    <property type="term" value="F:CMP kinase activity"/>
    <property type="evidence" value="ECO:0007669"/>
    <property type="project" value="RHEA"/>
</dbReference>
<dbReference type="GO" id="GO:0036431">
    <property type="term" value="F:dCMP kinase activity"/>
    <property type="evidence" value="ECO:0007669"/>
    <property type="project" value="RHEA"/>
</dbReference>
<dbReference type="GO" id="GO:0006220">
    <property type="term" value="P:pyrimidine nucleotide metabolic process"/>
    <property type="evidence" value="ECO:0007669"/>
    <property type="project" value="UniProtKB-UniRule"/>
</dbReference>
<dbReference type="CDD" id="cd02020">
    <property type="entry name" value="CMPK"/>
    <property type="match status" value="1"/>
</dbReference>
<dbReference type="Gene3D" id="3.40.50.300">
    <property type="entry name" value="P-loop containing nucleotide triphosphate hydrolases"/>
    <property type="match status" value="1"/>
</dbReference>
<dbReference type="HAMAP" id="MF_00238">
    <property type="entry name" value="Cytidyl_kinase_type1"/>
    <property type="match status" value="1"/>
</dbReference>
<dbReference type="InterPro" id="IPR003136">
    <property type="entry name" value="Cytidylate_kin"/>
</dbReference>
<dbReference type="InterPro" id="IPR011994">
    <property type="entry name" value="Cytidylate_kinase_dom"/>
</dbReference>
<dbReference type="InterPro" id="IPR027417">
    <property type="entry name" value="P-loop_NTPase"/>
</dbReference>
<dbReference type="NCBIfam" id="TIGR00017">
    <property type="entry name" value="cmk"/>
    <property type="match status" value="1"/>
</dbReference>
<dbReference type="Pfam" id="PF02224">
    <property type="entry name" value="Cytidylate_kin"/>
    <property type="match status" value="1"/>
</dbReference>
<dbReference type="SUPFAM" id="SSF52540">
    <property type="entry name" value="P-loop containing nucleoside triphosphate hydrolases"/>
    <property type="match status" value="1"/>
</dbReference>
<proteinExistence type="inferred from homology"/>
<organism>
    <name type="scientific">Maridesulfovibrio salexigens (strain ATCC 14822 / DSM 2638 / NCIMB 8403 / VKM B-1763)</name>
    <name type="common">Desulfovibrio salexigens</name>
    <dbReference type="NCBI Taxonomy" id="526222"/>
    <lineage>
        <taxon>Bacteria</taxon>
        <taxon>Pseudomonadati</taxon>
        <taxon>Thermodesulfobacteriota</taxon>
        <taxon>Desulfovibrionia</taxon>
        <taxon>Desulfovibrionales</taxon>
        <taxon>Desulfovibrionaceae</taxon>
        <taxon>Maridesulfovibrio</taxon>
    </lineage>
</organism>
<gene>
    <name evidence="1" type="primary">cmk</name>
    <name type="ordered locus">Desal_0177</name>
</gene>
<accession>C6BVN3</accession>